<comment type="function">
    <text evidence="1">Catalyzes the conversion of 4-hydroxy-tetrahydrodipicolinate (HTPA) to tetrahydrodipicolinate.</text>
</comment>
<comment type="catalytic activity">
    <reaction evidence="1">
        <text>(S)-2,3,4,5-tetrahydrodipicolinate + NAD(+) + H2O = (2S,4S)-4-hydroxy-2,3,4,5-tetrahydrodipicolinate + NADH + H(+)</text>
        <dbReference type="Rhea" id="RHEA:35323"/>
        <dbReference type="ChEBI" id="CHEBI:15377"/>
        <dbReference type="ChEBI" id="CHEBI:15378"/>
        <dbReference type="ChEBI" id="CHEBI:16845"/>
        <dbReference type="ChEBI" id="CHEBI:57540"/>
        <dbReference type="ChEBI" id="CHEBI:57945"/>
        <dbReference type="ChEBI" id="CHEBI:67139"/>
        <dbReference type="EC" id="1.17.1.8"/>
    </reaction>
</comment>
<comment type="catalytic activity">
    <reaction evidence="1">
        <text>(S)-2,3,4,5-tetrahydrodipicolinate + NADP(+) + H2O = (2S,4S)-4-hydroxy-2,3,4,5-tetrahydrodipicolinate + NADPH + H(+)</text>
        <dbReference type="Rhea" id="RHEA:35331"/>
        <dbReference type="ChEBI" id="CHEBI:15377"/>
        <dbReference type="ChEBI" id="CHEBI:15378"/>
        <dbReference type="ChEBI" id="CHEBI:16845"/>
        <dbReference type="ChEBI" id="CHEBI:57783"/>
        <dbReference type="ChEBI" id="CHEBI:58349"/>
        <dbReference type="ChEBI" id="CHEBI:67139"/>
        <dbReference type="EC" id="1.17.1.8"/>
    </reaction>
</comment>
<comment type="pathway">
    <text evidence="1">Amino-acid biosynthesis; L-lysine biosynthesis via DAP pathway; (S)-tetrahydrodipicolinate from L-aspartate: step 4/4.</text>
</comment>
<comment type="subcellular location">
    <subcellularLocation>
        <location evidence="1">Cytoplasm</location>
    </subcellularLocation>
</comment>
<comment type="similarity">
    <text evidence="1">Belongs to the DapB family.</text>
</comment>
<comment type="caution">
    <text evidence="2">Was originally thought to be a dihydrodipicolinate reductase (DHDPR), catalyzing the conversion of dihydrodipicolinate to tetrahydrodipicolinate. However, it was shown in E.coli that the substrate of the enzymatic reaction is not dihydrodipicolinate (DHDP) but in fact (2S,4S)-4-hydroxy-2,3,4,5-tetrahydrodipicolinic acid (HTPA), the product released by the DapA-catalyzed reaction.</text>
</comment>
<sequence>MTTDSLIPVVVNGAAGKMGREVVKAVAQAEDMMLVGAVDYNPNYRGQDVGEVAGCGALEVPIVDDLQSILVLATQEKIQGVMVDFTHPDSVYENVRSAIAYGVRPVVGTTGLTEEQLKDLADFADKASTGCLVIPNFSIGMVLLQQAAVQASQYFDHVEIIELHHNQKADAPSGTAIKTAQMLSGLGKTYNPPMVKETETIAGAKGALVDDNIRIHSVRLPGLIAHQEVIFGAKGEIYTLRHDTSDRSCYMAGVLLSIRKVTQLQSLVYGLEKIL</sequence>
<protein>
    <recommendedName>
        <fullName evidence="1">4-hydroxy-tetrahydrodipicolinate reductase</fullName>
        <shortName evidence="1">HTPA reductase</shortName>
        <ecNumber evidence="1">1.17.1.8</ecNumber>
    </recommendedName>
</protein>
<reference key="1">
    <citation type="journal article" date="2011" name="MBio">
        <title>Novel metabolic attributes of the genus Cyanothece, comprising a group of unicellular nitrogen-fixing Cyanobacteria.</title>
        <authorList>
            <person name="Bandyopadhyay A."/>
            <person name="Elvitigala T."/>
            <person name="Welsh E."/>
            <person name="Stockel J."/>
            <person name="Liberton M."/>
            <person name="Min H."/>
            <person name="Sherman L.A."/>
            <person name="Pakrasi H.B."/>
        </authorList>
    </citation>
    <scope>NUCLEOTIDE SEQUENCE [LARGE SCALE GENOMIC DNA]</scope>
    <source>
        <strain>PCC 8801 / RF-1</strain>
    </source>
</reference>
<name>DAPB_RIPO1</name>
<keyword id="KW-0028">Amino-acid biosynthesis</keyword>
<keyword id="KW-0963">Cytoplasm</keyword>
<keyword id="KW-0220">Diaminopimelate biosynthesis</keyword>
<keyword id="KW-0457">Lysine biosynthesis</keyword>
<keyword id="KW-0520">NAD</keyword>
<keyword id="KW-0521">NADP</keyword>
<keyword id="KW-0560">Oxidoreductase</keyword>
<keyword id="KW-1185">Reference proteome</keyword>
<gene>
    <name evidence="1" type="primary">dapB</name>
    <name type="ordered locus">PCC8801_1680</name>
</gene>
<evidence type="ECO:0000255" key="1">
    <source>
        <dbReference type="HAMAP-Rule" id="MF_00102"/>
    </source>
</evidence>
<evidence type="ECO:0000305" key="2"/>
<organism>
    <name type="scientific">Rippkaea orientalis (strain PCC 8801 / RF-1)</name>
    <name type="common">Cyanothece sp. (strain PCC 8801)</name>
    <dbReference type="NCBI Taxonomy" id="41431"/>
    <lineage>
        <taxon>Bacteria</taxon>
        <taxon>Bacillati</taxon>
        <taxon>Cyanobacteriota</taxon>
        <taxon>Cyanophyceae</taxon>
        <taxon>Oscillatoriophycideae</taxon>
        <taxon>Chroococcales</taxon>
        <taxon>Aphanothecaceae</taxon>
        <taxon>Rippkaea</taxon>
        <taxon>Rippkaea orientalis</taxon>
    </lineage>
</organism>
<feature type="chain" id="PRO_1000117364" description="4-hydroxy-tetrahydrodipicolinate reductase">
    <location>
        <begin position="1"/>
        <end position="275"/>
    </location>
</feature>
<feature type="active site" description="Proton donor/acceptor" evidence="1">
    <location>
        <position position="164"/>
    </location>
</feature>
<feature type="active site" description="Proton donor" evidence="1">
    <location>
        <position position="168"/>
    </location>
</feature>
<feature type="binding site" evidence="1">
    <location>
        <begin position="13"/>
        <end position="18"/>
    </location>
    <ligand>
        <name>NAD(+)</name>
        <dbReference type="ChEBI" id="CHEBI:57540"/>
    </ligand>
</feature>
<feature type="binding site" evidence="1">
    <location>
        <begin position="108"/>
        <end position="110"/>
    </location>
    <ligand>
        <name>NAD(+)</name>
        <dbReference type="ChEBI" id="CHEBI:57540"/>
    </ligand>
</feature>
<feature type="binding site" evidence="1">
    <location>
        <position position="165"/>
    </location>
    <ligand>
        <name>(S)-2,3,4,5-tetrahydrodipicolinate</name>
        <dbReference type="ChEBI" id="CHEBI:16845"/>
    </ligand>
</feature>
<feature type="binding site" evidence="1">
    <location>
        <begin position="174"/>
        <end position="175"/>
    </location>
    <ligand>
        <name>(S)-2,3,4,5-tetrahydrodipicolinate</name>
        <dbReference type="ChEBI" id="CHEBI:16845"/>
    </ligand>
</feature>
<accession>B7JW41</accession>
<dbReference type="EC" id="1.17.1.8" evidence="1"/>
<dbReference type="EMBL" id="CP001287">
    <property type="protein sequence ID" value="ACK65730.1"/>
    <property type="molecule type" value="Genomic_DNA"/>
</dbReference>
<dbReference type="RefSeq" id="WP_012595003.1">
    <property type="nucleotide sequence ID" value="NC_011726.1"/>
</dbReference>
<dbReference type="SMR" id="B7JW41"/>
<dbReference type="STRING" id="41431.PCC8801_1680"/>
<dbReference type="KEGG" id="cyp:PCC8801_1680"/>
<dbReference type="eggNOG" id="COG0289">
    <property type="taxonomic scope" value="Bacteria"/>
</dbReference>
<dbReference type="HOGENOM" id="CLU_047479_0_0_3"/>
<dbReference type="OrthoDB" id="9790352at2"/>
<dbReference type="UniPathway" id="UPA00034">
    <property type="reaction ID" value="UER00018"/>
</dbReference>
<dbReference type="Proteomes" id="UP000008204">
    <property type="component" value="Chromosome"/>
</dbReference>
<dbReference type="GO" id="GO:0005829">
    <property type="term" value="C:cytosol"/>
    <property type="evidence" value="ECO:0007669"/>
    <property type="project" value="TreeGrafter"/>
</dbReference>
<dbReference type="GO" id="GO:0008839">
    <property type="term" value="F:4-hydroxy-tetrahydrodipicolinate reductase"/>
    <property type="evidence" value="ECO:0007669"/>
    <property type="project" value="UniProtKB-EC"/>
</dbReference>
<dbReference type="GO" id="GO:0051287">
    <property type="term" value="F:NAD binding"/>
    <property type="evidence" value="ECO:0007669"/>
    <property type="project" value="UniProtKB-UniRule"/>
</dbReference>
<dbReference type="GO" id="GO:0050661">
    <property type="term" value="F:NADP binding"/>
    <property type="evidence" value="ECO:0007669"/>
    <property type="project" value="UniProtKB-UniRule"/>
</dbReference>
<dbReference type="GO" id="GO:0016726">
    <property type="term" value="F:oxidoreductase activity, acting on CH or CH2 groups, NAD or NADP as acceptor"/>
    <property type="evidence" value="ECO:0007669"/>
    <property type="project" value="UniProtKB-UniRule"/>
</dbReference>
<dbReference type="GO" id="GO:0019877">
    <property type="term" value="P:diaminopimelate biosynthetic process"/>
    <property type="evidence" value="ECO:0007669"/>
    <property type="project" value="UniProtKB-UniRule"/>
</dbReference>
<dbReference type="GO" id="GO:0009089">
    <property type="term" value="P:lysine biosynthetic process via diaminopimelate"/>
    <property type="evidence" value="ECO:0007669"/>
    <property type="project" value="UniProtKB-UniRule"/>
</dbReference>
<dbReference type="CDD" id="cd02274">
    <property type="entry name" value="DHDPR_N"/>
    <property type="match status" value="1"/>
</dbReference>
<dbReference type="FunFam" id="3.30.360.10:FF:000009">
    <property type="entry name" value="4-hydroxy-tetrahydrodipicolinate reductase"/>
    <property type="match status" value="1"/>
</dbReference>
<dbReference type="Gene3D" id="3.30.360.10">
    <property type="entry name" value="Dihydrodipicolinate Reductase, domain 2"/>
    <property type="match status" value="1"/>
</dbReference>
<dbReference type="Gene3D" id="3.40.50.720">
    <property type="entry name" value="NAD(P)-binding Rossmann-like Domain"/>
    <property type="match status" value="1"/>
</dbReference>
<dbReference type="HAMAP" id="MF_00102">
    <property type="entry name" value="DapB"/>
    <property type="match status" value="1"/>
</dbReference>
<dbReference type="InterPro" id="IPR022663">
    <property type="entry name" value="DapB_C"/>
</dbReference>
<dbReference type="InterPro" id="IPR000846">
    <property type="entry name" value="DapB_N"/>
</dbReference>
<dbReference type="InterPro" id="IPR022664">
    <property type="entry name" value="DapB_N_CS"/>
</dbReference>
<dbReference type="InterPro" id="IPR023940">
    <property type="entry name" value="DHDPR_bac"/>
</dbReference>
<dbReference type="InterPro" id="IPR036291">
    <property type="entry name" value="NAD(P)-bd_dom_sf"/>
</dbReference>
<dbReference type="NCBIfam" id="TIGR00036">
    <property type="entry name" value="dapB"/>
    <property type="match status" value="1"/>
</dbReference>
<dbReference type="PANTHER" id="PTHR20836:SF0">
    <property type="entry name" value="4-HYDROXY-TETRAHYDRODIPICOLINATE REDUCTASE 1, CHLOROPLASTIC-RELATED"/>
    <property type="match status" value="1"/>
</dbReference>
<dbReference type="PANTHER" id="PTHR20836">
    <property type="entry name" value="DIHYDRODIPICOLINATE REDUCTASE"/>
    <property type="match status" value="1"/>
</dbReference>
<dbReference type="Pfam" id="PF05173">
    <property type="entry name" value="DapB_C"/>
    <property type="match status" value="1"/>
</dbReference>
<dbReference type="Pfam" id="PF01113">
    <property type="entry name" value="DapB_N"/>
    <property type="match status" value="1"/>
</dbReference>
<dbReference type="PIRSF" id="PIRSF000161">
    <property type="entry name" value="DHPR"/>
    <property type="match status" value="1"/>
</dbReference>
<dbReference type="SUPFAM" id="SSF55347">
    <property type="entry name" value="Glyceraldehyde-3-phosphate dehydrogenase-like, C-terminal domain"/>
    <property type="match status" value="1"/>
</dbReference>
<dbReference type="SUPFAM" id="SSF51735">
    <property type="entry name" value="NAD(P)-binding Rossmann-fold domains"/>
    <property type="match status" value="1"/>
</dbReference>
<dbReference type="PROSITE" id="PS01298">
    <property type="entry name" value="DAPB"/>
    <property type="match status" value="1"/>
</dbReference>
<proteinExistence type="inferred from homology"/>